<organism>
    <name type="scientific">Staphylococcus aureus (strain bovine RF122 / ET3-1)</name>
    <dbReference type="NCBI Taxonomy" id="273036"/>
    <lineage>
        <taxon>Bacteria</taxon>
        <taxon>Bacillati</taxon>
        <taxon>Bacillota</taxon>
        <taxon>Bacilli</taxon>
        <taxon>Bacillales</taxon>
        <taxon>Staphylococcaceae</taxon>
        <taxon>Staphylococcus</taxon>
    </lineage>
</organism>
<protein>
    <recommendedName>
        <fullName>Heme response regulator HssR</fullName>
    </recommendedName>
</protein>
<comment type="function">
    <text evidence="1">Member of the two-component regulatory system HssS/HssR involved in intracellular heme homeostasis and tempering of staphylococcal virulence. Phosphorylated HssR binds to a direct repeat sequence within hrtAB promoter and activates the expression of hrtAB, an efflux pump, in response to extracellular heme, hemin, hemoglobin or blood (By similarity).</text>
</comment>
<comment type="subcellular location">
    <subcellularLocation>
        <location evidence="4">Cytoplasm</location>
    </subcellularLocation>
</comment>
<comment type="PTM">
    <text evidence="1">Phosphorylated by HssS.</text>
</comment>
<evidence type="ECO:0000250" key="1"/>
<evidence type="ECO:0000255" key="2">
    <source>
        <dbReference type="PROSITE-ProRule" id="PRU00169"/>
    </source>
</evidence>
<evidence type="ECO:0000255" key="3">
    <source>
        <dbReference type="PROSITE-ProRule" id="PRU01091"/>
    </source>
</evidence>
<evidence type="ECO:0000305" key="4"/>
<keyword id="KW-0010">Activator</keyword>
<keyword id="KW-0963">Cytoplasm</keyword>
<keyword id="KW-0238">DNA-binding</keyword>
<keyword id="KW-0597">Phosphoprotein</keyword>
<keyword id="KW-0804">Transcription</keyword>
<keyword id="KW-0805">Transcription regulation</keyword>
<keyword id="KW-0902">Two-component regulatory system</keyword>
<keyword id="KW-0843">Virulence</keyword>
<accession>Q2YZ24</accession>
<sequence>MVQCLVVDDDSRILNYIASHLQTEHIDAYTQPSGEAALKLLEKQRVDIAVIDIMMDGMDGFQLCNTLKNDYDIPVIMLTARDALSDKERAFISGTDDYVTKPFEVKELIFRIRAVLRRYNINSNSEMTIGNLTLNQSYLELQVSNKTMTLPNKEFQLLFMLATRPKQIFTREQIIEKIWGYDYEGDERTVDVHIKRLRQRLKKLNATLTIETVRGQGYKVENHV</sequence>
<reference key="1">
    <citation type="journal article" date="2007" name="PLoS ONE">
        <title>Molecular correlates of host specialization in Staphylococcus aureus.</title>
        <authorList>
            <person name="Herron-Olson L."/>
            <person name="Fitzgerald J.R."/>
            <person name="Musser J.M."/>
            <person name="Kapur V."/>
        </authorList>
    </citation>
    <scope>NUCLEOTIDE SEQUENCE [LARGE SCALE GENOMIC DNA]</scope>
    <source>
        <strain>bovine RF122 / ET3-1</strain>
    </source>
</reference>
<name>HSSR_STAAB</name>
<dbReference type="EMBL" id="AJ938182">
    <property type="protein sequence ID" value="CAI81929.1"/>
    <property type="molecule type" value="Genomic_DNA"/>
</dbReference>
<dbReference type="RefSeq" id="WP_000249502.1">
    <property type="nucleotide sequence ID" value="NC_007622.1"/>
</dbReference>
<dbReference type="SMR" id="Q2YZ24"/>
<dbReference type="KEGG" id="sab:SAB2240"/>
<dbReference type="HOGENOM" id="CLU_000445_30_3_9"/>
<dbReference type="GO" id="GO:0005829">
    <property type="term" value="C:cytosol"/>
    <property type="evidence" value="ECO:0007669"/>
    <property type="project" value="TreeGrafter"/>
</dbReference>
<dbReference type="GO" id="GO:0032993">
    <property type="term" value="C:protein-DNA complex"/>
    <property type="evidence" value="ECO:0007669"/>
    <property type="project" value="TreeGrafter"/>
</dbReference>
<dbReference type="GO" id="GO:0000156">
    <property type="term" value="F:phosphorelay response regulator activity"/>
    <property type="evidence" value="ECO:0007669"/>
    <property type="project" value="TreeGrafter"/>
</dbReference>
<dbReference type="GO" id="GO:0000976">
    <property type="term" value="F:transcription cis-regulatory region binding"/>
    <property type="evidence" value="ECO:0007669"/>
    <property type="project" value="TreeGrafter"/>
</dbReference>
<dbReference type="GO" id="GO:0006355">
    <property type="term" value="P:regulation of DNA-templated transcription"/>
    <property type="evidence" value="ECO:0007669"/>
    <property type="project" value="InterPro"/>
</dbReference>
<dbReference type="CDD" id="cd17574">
    <property type="entry name" value="REC_OmpR"/>
    <property type="match status" value="1"/>
</dbReference>
<dbReference type="CDD" id="cd00383">
    <property type="entry name" value="trans_reg_C"/>
    <property type="match status" value="1"/>
</dbReference>
<dbReference type="FunFam" id="1.10.10.10:FF:000018">
    <property type="entry name" value="DNA-binding response regulator ResD"/>
    <property type="match status" value="1"/>
</dbReference>
<dbReference type="Gene3D" id="3.40.50.2300">
    <property type="match status" value="1"/>
</dbReference>
<dbReference type="Gene3D" id="6.10.250.690">
    <property type="match status" value="1"/>
</dbReference>
<dbReference type="Gene3D" id="1.10.10.10">
    <property type="entry name" value="Winged helix-like DNA-binding domain superfamily/Winged helix DNA-binding domain"/>
    <property type="match status" value="1"/>
</dbReference>
<dbReference type="InterPro" id="IPR011006">
    <property type="entry name" value="CheY-like_superfamily"/>
</dbReference>
<dbReference type="InterPro" id="IPR001867">
    <property type="entry name" value="OmpR/PhoB-type_DNA-bd"/>
</dbReference>
<dbReference type="InterPro" id="IPR001789">
    <property type="entry name" value="Sig_transdc_resp-reg_receiver"/>
</dbReference>
<dbReference type="InterPro" id="IPR039420">
    <property type="entry name" value="WalR-like"/>
</dbReference>
<dbReference type="InterPro" id="IPR036388">
    <property type="entry name" value="WH-like_DNA-bd_sf"/>
</dbReference>
<dbReference type="PANTHER" id="PTHR48111:SF49">
    <property type="entry name" value="HEME RESPONSE REGULATOR HSSR"/>
    <property type="match status" value="1"/>
</dbReference>
<dbReference type="PANTHER" id="PTHR48111">
    <property type="entry name" value="REGULATOR OF RPOS"/>
    <property type="match status" value="1"/>
</dbReference>
<dbReference type="Pfam" id="PF00072">
    <property type="entry name" value="Response_reg"/>
    <property type="match status" value="1"/>
</dbReference>
<dbReference type="Pfam" id="PF00486">
    <property type="entry name" value="Trans_reg_C"/>
    <property type="match status" value="1"/>
</dbReference>
<dbReference type="SMART" id="SM00448">
    <property type="entry name" value="REC"/>
    <property type="match status" value="1"/>
</dbReference>
<dbReference type="SMART" id="SM00862">
    <property type="entry name" value="Trans_reg_C"/>
    <property type="match status" value="1"/>
</dbReference>
<dbReference type="SUPFAM" id="SSF52172">
    <property type="entry name" value="CheY-like"/>
    <property type="match status" value="1"/>
</dbReference>
<dbReference type="PROSITE" id="PS51755">
    <property type="entry name" value="OMPR_PHOB"/>
    <property type="match status" value="1"/>
</dbReference>
<dbReference type="PROSITE" id="PS50110">
    <property type="entry name" value="RESPONSE_REGULATORY"/>
    <property type="match status" value="1"/>
</dbReference>
<feature type="chain" id="PRO_0000331319" description="Heme response regulator HssR">
    <location>
        <begin position="1"/>
        <end position="224"/>
    </location>
</feature>
<feature type="domain" description="Response regulatory" evidence="2">
    <location>
        <begin position="3"/>
        <end position="116"/>
    </location>
</feature>
<feature type="DNA-binding region" description="OmpR/PhoB-type" evidence="3">
    <location>
        <begin position="124"/>
        <end position="222"/>
    </location>
</feature>
<feature type="modified residue" description="4-aspartylphosphate" evidence="2">
    <location>
        <position position="52"/>
    </location>
</feature>
<gene>
    <name type="primary">hssR</name>
    <name type="ordered locus">SAB2240</name>
</gene>
<proteinExistence type="inferred from homology"/>